<gene>
    <name type="primary">gltT</name>
    <name type="synonym">yhfG</name>
    <name type="ordered locus">BSU10220</name>
</gene>
<organism>
    <name type="scientific">Bacillus subtilis (strain 168)</name>
    <dbReference type="NCBI Taxonomy" id="224308"/>
    <lineage>
        <taxon>Bacteria</taxon>
        <taxon>Bacillati</taxon>
        <taxon>Bacillota</taxon>
        <taxon>Bacilli</taxon>
        <taxon>Bacillales</taxon>
        <taxon>Bacillaceae</taxon>
        <taxon>Bacillus</taxon>
    </lineage>
</organism>
<sequence>MKRIKFGLATQIFVGLILGVIVGVIWYGNPALPTYLQPIGDLFLRLIKMIVIPIVVSSLIIGVAGAGNGKQVGKLGFRTILYFEIITTFAIILGLALANIFHPGTGVNIHEAQKSDISQYVETEKEQSNKSVAETFLHIVPTNFFQSLVEGDLLAIICFTVLFALGISAIGERGKPVLAFFEGVSHAMFHVVNLVMKVAPFGVFALIGVTVSKFGLGSLISLGKLVGLVYVALAFFLIVIFGIVAKIAGISIFKFLAYMKDEILLAFSTSSSETVLPRIMEKMEKIGCPKGIVSFVIPIGYTFNLDGSVLYQSIAALFLAQVYGIDLTIWHQITLVLVLMVTSKGMAAVPGTSFVVLLATLGTIGVPAEGLAFIAGVDRIMDMARTVVNLTGNALAAVVMSKWEGMFNPAKAETVMSQSKTEQNATISG</sequence>
<name>GLTT_BACSU</name>
<evidence type="ECO:0000250" key="1">
    <source>
        <dbReference type="UniProtKB" id="P24943"/>
    </source>
</evidence>
<evidence type="ECO:0000255" key="2"/>
<evidence type="ECO:0000269" key="3">
    <source>
    </source>
</evidence>
<evidence type="ECO:0000269" key="4">
    <source>
    </source>
</evidence>
<evidence type="ECO:0000305" key="5"/>
<protein>
    <recommendedName>
        <fullName>Proton/sodium-glutamate symport protein</fullName>
    </recommendedName>
    <alternativeName>
        <fullName>Glutamate-aspartate carrier protein</fullName>
    </alternativeName>
</protein>
<proteinExistence type="evidence at protein level"/>
<feature type="chain" id="PRO_0000360666" description="Proton/sodium-glutamate symport protein">
    <location>
        <begin position="1"/>
        <end position="429"/>
    </location>
</feature>
<feature type="topological domain" description="Cytoplasmic" evidence="2">
    <location>
        <begin position="1"/>
        <end position="5"/>
    </location>
</feature>
<feature type="transmembrane region" description="Helical" evidence="2">
    <location>
        <begin position="6"/>
        <end position="26"/>
    </location>
</feature>
<feature type="topological domain" description="Extracellular" evidence="2">
    <location>
        <begin position="27"/>
        <end position="45"/>
    </location>
</feature>
<feature type="transmembrane region" description="Helical" evidence="2">
    <location>
        <begin position="46"/>
        <end position="66"/>
    </location>
</feature>
<feature type="topological domain" description="Cytoplasmic" evidence="2">
    <location>
        <begin position="67"/>
        <end position="79"/>
    </location>
</feature>
<feature type="transmembrane region" description="Helical" evidence="2">
    <location>
        <begin position="80"/>
        <end position="100"/>
    </location>
</feature>
<feature type="topological domain" description="Extracellular" evidence="2">
    <location>
        <begin position="101"/>
        <end position="150"/>
    </location>
</feature>
<feature type="transmembrane region" description="Helical" evidence="2">
    <location>
        <begin position="151"/>
        <end position="171"/>
    </location>
</feature>
<feature type="topological domain" description="Cytoplasmic" evidence="2">
    <location>
        <begin position="172"/>
        <end position="190"/>
    </location>
</feature>
<feature type="transmembrane region" description="Helical" evidence="2">
    <location>
        <begin position="191"/>
        <end position="211"/>
    </location>
</feature>
<feature type="topological domain" description="Extracellular" evidence="2">
    <location>
        <begin position="212"/>
        <end position="224"/>
    </location>
</feature>
<feature type="transmembrane region" description="Helical" evidence="2">
    <location>
        <begin position="225"/>
        <end position="245"/>
    </location>
</feature>
<feature type="topological domain" description="Cytoplasmic" evidence="2">
    <location>
        <position position="246"/>
    </location>
</feature>
<feature type="transmembrane region" description="Helical" evidence="2">
    <location>
        <begin position="247"/>
        <end position="267"/>
    </location>
</feature>
<feature type="topological domain" description="Extracellular" evidence="2">
    <location>
        <begin position="268"/>
        <end position="290"/>
    </location>
</feature>
<feature type="transmembrane region" description="Helical" evidence="2">
    <location>
        <begin position="291"/>
        <end position="311"/>
    </location>
</feature>
<feature type="topological domain" description="Cytoplasmic" evidence="2">
    <location>
        <begin position="312"/>
        <end position="321"/>
    </location>
</feature>
<feature type="transmembrane region" description="Helical" evidence="2">
    <location>
        <begin position="322"/>
        <end position="342"/>
    </location>
</feature>
<feature type="topological domain" description="Extracellular" evidence="2">
    <location>
        <begin position="343"/>
        <end position="353"/>
    </location>
</feature>
<feature type="transmembrane region" description="Helical" evidence="2">
    <location>
        <begin position="354"/>
        <end position="374"/>
    </location>
</feature>
<feature type="topological domain" description="Cytoplasmic" evidence="2">
    <location>
        <begin position="375"/>
        <end position="429"/>
    </location>
</feature>
<reference key="1">
    <citation type="journal article" date="1998" name="Microbiology">
        <title>The 172 kb prkA-addAB region from 83 degrees to 97 degrees of the Bacillus subtilis chromosome contains several dysfunctional genes, the glyB marker, many genes encoding transporter proteins, and the ubiquitous hit gene.</title>
        <authorList>
            <person name="Noback M.A."/>
            <person name="Holsappel S."/>
            <person name="Kiewiet R."/>
            <person name="Terpstra P."/>
            <person name="Wambutt R."/>
            <person name="Wedler H."/>
            <person name="Venema G."/>
            <person name="Bron S."/>
        </authorList>
    </citation>
    <scope>NUCLEOTIDE SEQUENCE [GENOMIC DNA]</scope>
    <source>
        <strain>168</strain>
    </source>
</reference>
<reference key="2">
    <citation type="journal article" date="1997" name="Nature">
        <title>The complete genome sequence of the Gram-positive bacterium Bacillus subtilis.</title>
        <authorList>
            <person name="Kunst F."/>
            <person name="Ogasawara N."/>
            <person name="Moszer I."/>
            <person name="Albertini A.M."/>
            <person name="Alloni G."/>
            <person name="Azevedo V."/>
            <person name="Bertero M.G."/>
            <person name="Bessieres P."/>
            <person name="Bolotin A."/>
            <person name="Borchert S."/>
            <person name="Borriss R."/>
            <person name="Boursier L."/>
            <person name="Brans A."/>
            <person name="Braun M."/>
            <person name="Brignell S.C."/>
            <person name="Bron S."/>
            <person name="Brouillet S."/>
            <person name="Bruschi C.V."/>
            <person name="Caldwell B."/>
            <person name="Capuano V."/>
            <person name="Carter N.M."/>
            <person name="Choi S.-K."/>
            <person name="Codani J.-J."/>
            <person name="Connerton I.F."/>
            <person name="Cummings N.J."/>
            <person name="Daniel R.A."/>
            <person name="Denizot F."/>
            <person name="Devine K.M."/>
            <person name="Duesterhoeft A."/>
            <person name="Ehrlich S.D."/>
            <person name="Emmerson P.T."/>
            <person name="Entian K.-D."/>
            <person name="Errington J."/>
            <person name="Fabret C."/>
            <person name="Ferrari E."/>
            <person name="Foulger D."/>
            <person name="Fritz C."/>
            <person name="Fujita M."/>
            <person name="Fujita Y."/>
            <person name="Fuma S."/>
            <person name="Galizzi A."/>
            <person name="Galleron N."/>
            <person name="Ghim S.-Y."/>
            <person name="Glaser P."/>
            <person name="Goffeau A."/>
            <person name="Golightly E.J."/>
            <person name="Grandi G."/>
            <person name="Guiseppi G."/>
            <person name="Guy B.J."/>
            <person name="Haga K."/>
            <person name="Haiech J."/>
            <person name="Harwood C.R."/>
            <person name="Henaut A."/>
            <person name="Hilbert H."/>
            <person name="Holsappel S."/>
            <person name="Hosono S."/>
            <person name="Hullo M.-F."/>
            <person name="Itaya M."/>
            <person name="Jones L.-M."/>
            <person name="Joris B."/>
            <person name="Karamata D."/>
            <person name="Kasahara Y."/>
            <person name="Klaerr-Blanchard M."/>
            <person name="Klein C."/>
            <person name="Kobayashi Y."/>
            <person name="Koetter P."/>
            <person name="Koningstein G."/>
            <person name="Krogh S."/>
            <person name="Kumano M."/>
            <person name="Kurita K."/>
            <person name="Lapidus A."/>
            <person name="Lardinois S."/>
            <person name="Lauber J."/>
            <person name="Lazarevic V."/>
            <person name="Lee S.-M."/>
            <person name="Levine A."/>
            <person name="Liu H."/>
            <person name="Masuda S."/>
            <person name="Mauel C."/>
            <person name="Medigue C."/>
            <person name="Medina N."/>
            <person name="Mellado R.P."/>
            <person name="Mizuno M."/>
            <person name="Moestl D."/>
            <person name="Nakai S."/>
            <person name="Noback M."/>
            <person name="Noone D."/>
            <person name="O'Reilly M."/>
            <person name="Ogawa K."/>
            <person name="Ogiwara A."/>
            <person name="Oudega B."/>
            <person name="Park S.-H."/>
            <person name="Parro V."/>
            <person name="Pohl T.M."/>
            <person name="Portetelle D."/>
            <person name="Porwollik S."/>
            <person name="Prescott A.M."/>
            <person name="Presecan E."/>
            <person name="Pujic P."/>
            <person name="Purnelle B."/>
            <person name="Rapoport G."/>
            <person name="Rey M."/>
            <person name="Reynolds S."/>
            <person name="Rieger M."/>
            <person name="Rivolta C."/>
            <person name="Rocha E."/>
            <person name="Roche B."/>
            <person name="Rose M."/>
            <person name="Sadaie Y."/>
            <person name="Sato T."/>
            <person name="Scanlan E."/>
            <person name="Schleich S."/>
            <person name="Schroeter R."/>
            <person name="Scoffone F."/>
            <person name="Sekiguchi J."/>
            <person name="Sekowska A."/>
            <person name="Seror S.J."/>
            <person name="Serror P."/>
            <person name="Shin B.-S."/>
            <person name="Soldo B."/>
            <person name="Sorokin A."/>
            <person name="Tacconi E."/>
            <person name="Takagi T."/>
            <person name="Takahashi H."/>
            <person name="Takemaru K."/>
            <person name="Takeuchi M."/>
            <person name="Tamakoshi A."/>
            <person name="Tanaka T."/>
            <person name="Terpstra P."/>
            <person name="Tognoni A."/>
            <person name="Tosato V."/>
            <person name="Uchiyama S."/>
            <person name="Vandenbol M."/>
            <person name="Vannier F."/>
            <person name="Vassarotti A."/>
            <person name="Viari A."/>
            <person name="Wambutt R."/>
            <person name="Wedler E."/>
            <person name="Wedler H."/>
            <person name="Weitzenegger T."/>
            <person name="Winters P."/>
            <person name="Wipat A."/>
            <person name="Yamamoto H."/>
            <person name="Yamane K."/>
            <person name="Yasumoto K."/>
            <person name="Yata K."/>
            <person name="Yoshida K."/>
            <person name="Yoshikawa H.-F."/>
            <person name="Zumstein E."/>
            <person name="Yoshikawa H."/>
            <person name="Danchin A."/>
        </authorList>
    </citation>
    <scope>NUCLEOTIDE SEQUENCE [LARGE SCALE GENOMIC DNA]</scope>
    <source>
        <strain>168</strain>
    </source>
</reference>
<reference key="3">
    <citation type="journal article" date="2013" name="Mol. Microbiol.">
        <title>Flotillins functionally organize the bacterial membrane.</title>
        <authorList>
            <person name="Bach J.N."/>
            <person name="Bramkamp M."/>
        </authorList>
    </citation>
    <scope>INTERACTION WITH FLOT</scope>
    <scope>SUBCELLULAR LOCATION</scope>
    <source>
        <strain>168</strain>
    </source>
</reference>
<reference key="4">
    <citation type="journal article" date="2021" name="PLoS Genet.">
        <title>Essentiality of c-di-AMP in Bacillus subtilis: Bypassing mutations converge in potassium and glutamate homeostasis.</title>
        <authorList>
            <person name="Krueger L."/>
            <person name="Herzberg C."/>
            <person name="Rath H."/>
            <person name="Pedreira T."/>
            <person name="Ischebeck T."/>
            <person name="Poehlein A."/>
            <person name="Gundlach J."/>
            <person name="Daniel R."/>
            <person name="Voelker U."/>
            <person name="Maeder U."/>
            <person name="Stuelke J."/>
        </authorList>
    </citation>
    <scope>FUNCTION AS A GLUTAMATE TRANSPORTER</scope>
    <scope>INDUCTION</scope>
</reference>
<comment type="function">
    <text evidence="1 4">This carrier protein is part of the Na(+)-dependent, binding-protein-independent glutamate-aspartate transport system.</text>
</comment>
<comment type="subunit">
    <text evidence="1 3">Homotrimer (By similarity). Interacts with FloT (PubMed:23651456).</text>
</comment>
<comment type="subcellular location">
    <subcellularLocation>
        <location evidence="3">Cell membrane</location>
        <topology evidence="5">Multi-pass membrane protein</topology>
    </subcellularLocation>
    <subcellularLocation>
        <location evidence="3">Membrane raft</location>
        <topology>Multi-pass membrane protein</topology>
    </subcellularLocation>
    <text evidence="3">Present in detergent-resistant membrane (DRM) fractions that may be equivalent to eukaryotic membrane rafts; these rafts include proteins involved in signaling, molecule trafficking and protein secretion.</text>
</comment>
<comment type="induction">
    <text evidence="4">In the presence of glutamate in the medium, the expression is reduced two-fold, at high potassium concentration (5 mM). In the absence of glutamate, the expression is about two-fold increased at the increased potassium concentration.</text>
</comment>
<comment type="similarity">
    <text evidence="5">Belongs to the dicarboxylate/amino acid:cation symporter (DAACS) (TC 2.A.23) family.</text>
</comment>
<dbReference type="EMBL" id="Y14083">
    <property type="protein sequence ID" value="CAA74528.1"/>
    <property type="molecule type" value="Genomic_DNA"/>
</dbReference>
<dbReference type="EMBL" id="AL009126">
    <property type="protein sequence ID" value="CAB12862.1"/>
    <property type="molecule type" value="Genomic_DNA"/>
</dbReference>
<dbReference type="PIR" id="D69635">
    <property type="entry name" value="D69635"/>
</dbReference>
<dbReference type="RefSeq" id="NP_388903.1">
    <property type="nucleotide sequence ID" value="NC_000964.3"/>
</dbReference>
<dbReference type="RefSeq" id="WP_003245579.1">
    <property type="nucleotide sequence ID" value="NZ_OZ025638.1"/>
</dbReference>
<dbReference type="SMR" id="O07605"/>
<dbReference type="FunCoup" id="O07605">
    <property type="interactions" value="33"/>
</dbReference>
<dbReference type="STRING" id="224308.BSU10220"/>
<dbReference type="PaxDb" id="224308-BSU10220"/>
<dbReference type="EnsemblBacteria" id="CAB12862">
    <property type="protein sequence ID" value="CAB12862"/>
    <property type="gene ID" value="BSU_10220"/>
</dbReference>
<dbReference type="GeneID" id="939770"/>
<dbReference type="KEGG" id="bsu:BSU10220"/>
<dbReference type="PATRIC" id="fig|224308.179.peg.1098"/>
<dbReference type="eggNOG" id="COG1301">
    <property type="taxonomic scope" value="Bacteria"/>
</dbReference>
<dbReference type="InParanoid" id="O07605"/>
<dbReference type="OrthoDB" id="9768885at2"/>
<dbReference type="PhylomeDB" id="O07605"/>
<dbReference type="BioCyc" id="BSUB:BSU10220-MONOMER"/>
<dbReference type="Proteomes" id="UP000001570">
    <property type="component" value="Chromosome"/>
</dbReference>
<dbReference type="GO" id="GO:0045121">
    <property type="term" value="C:membrane raft"/>
    <property type="evidence" value="ECO:0007669"/>
    <property type="project" value="UniProtKB-SubCell"/>
</dbReference>
<dbReference type="GO" id="GO:0005886">
    <property type="term" value="C:plasma membrane"/>
    <property type="evidence" value="ECO:0000318"/>
    <property type="project" value="GO_Central"/>
</dbReference>
<dbReference type="GO" id="GO:0015293">
    <property type="term" value="F:symporter activity"/>
    <property type="evidence" value="ECO:0007669"/>
    <property type="project" value="UniProtKB-KW"/>
</dbReference>
<dbReference type="GO" id="GO:0022857">
    <property type="term" value="F:transmembrane transporter activity"/>
    <property type="evidence" value="ECO:0000318"/>
    <property type="project" value="GO_Central"/>
</dbReference>
<dbReference type="GO" id="GO:0006865">
    <property type="term" value="P:amino acid transport"/>
    <property type="evidence" value="ECO:0007669"/>
    <property type="project" value="UniProtKB-KW"/>
</dbReference>
<dbReference type="GO" id="GO:0006835">
    <property type="term" value="P:dicarboxylic acid transport"/>
    <property type="evidence" value="ECO:0000318"/>
    <property type="project" value="GO_Central"/>
</dbReference>
<dbReference type="FunFam" id="1.10.3860.10:FF:000001">
    <property type="entry name" value="C4-dicarboxylate transport protein"/>
    <property type="match status" value="1"/>
</dbReference>
<dbReference type="Gene3D" id="1.10.3860.10">
    <property type="entry name" value="Sodium:dicarboxylate symporter"/>
    <property type="match status" value="1"/>
</dbReference>
<dbReference type="InterPro" id="IPR001991">
    <property type="entry name" value="Na-dicarboxylate_symporter"/>
</dbReference>
<dbReference type="InterPro" id="IPR018107">
    <property type="entry name" value="Na-dicarboxylate_symporter_CS"/>
</dbReference>
<dbReference type="InterPro" id="IPR036458">
    <property type="entry name" value="Na:dicarbo_symporter_sf"/>
</dbReference>
<dbReference type="PANTHER" id="PTHR42865">
    <property type="entry name" value="PROTON/GLUTAMATE-ASPARTATE SYMPORTER"/>
    <property type="match status" value="1"/>
</dbReference>
<dbReference type="PANTHER" id="PTHR42865:SF7">
    <property type="entry name" value="PROTON_GLUTAMATE-ASPARTATE SYMPORTER"/>
    <property type="match status" value="1"/>
</dbReference>
<dbReference type="Pfam" id="PF00375">
    <property type="entry name" value="SDF"/>
    <property type="match status" value="1"/>
</dbReference>
<dbReference type="PRINTS" id="PR00173">
    <property type="entry name" value="EDTRNSPORT"/>
</dbReference>
<dbReference type="SUPFAM" id="SSF118215">
    <property type="entry name" value="Proton glutamate symport protein"/>
    <property type="match status" value="1"/>
</dbReference>
<dbReference type="PROSITE" id="PS00713">
    <property type="entry name" value="NA_DICARBOXYL_SYMP_1"/>
    <property type="match status" value="1"/>
</dbReference>
<dbReference type="PROSITE" id="PS00714">
    <property type="entry name" value="NA_DICARBOXYL_SYMP_2"/>
    <property type="match status" value="1"/>
</dbReference>
<accession>O07605</accession>
<accession>Q796U4</accession>
<keyword id="KW-0029">Amino-acid transport</keyword>
<keyword id="KW-1003">Cell membrane</keyword>
<keyword id="KW-0472">Membrane</keyword>
<keyword id="KW-1185">Reference proteome</keyword>
<keyword id="KW-0769">Symport</keyword>
<keyword id="KW-0812">Transmembrane</keyword>
<keyword id="KW-1133">Transmembrane helix</keyword>
<keyword id="KW-0813">Transport</keyword>